<proteinExistence type="inferred from homology"/>
<keyword id="KW-0150">Chloroplast</keyword>
<keyword id="KW-0934">Plastid</keyword>
<keyword id="KW-0687">Ribonucleoprotein</keyword>
<keyword id="KW-0689">Ribosomal protein</keyword>
<gene>
    <name type="primary">rps15</name>
</gene>
<protein>
    <recommendedName>
        <fullName evidence="2">Small ribosomal subunit protein uS15c</fullName>
    </recommendedName>
    <alternativeName>
        <fullName>30S ribosomal protein S15, chloroplastic</fullName>
    </alternativeName>
</protein>
<name>RR15_LEPVR</name>
<feature type="chain" id="PRO_0000354264" description="Small ribosomal subunit protein uS15c">
    <location>
        <begin position="1"/>
        <end position="88"/>
    </location>
</feature>
<comment type="subunit">
    <text evidence="1">Part of the 30S ribosomal subunit.</text>
</comment>
<comment type="subcellular location">
    <subcellularLocation>
        <location>Plastid</location>
        <location>Chloroplast</location>
    </subcellularLocation>
</comment>
<comment type="similarity">
    <text evidence="2">Belongs to the universal ribosomal protein uS15 family.</text>
</comment>
<organism>
    <name type="scientific">Lepidium virginicum</name>
    <name type="common">Virginia pepperweed</name>
    <dbReference type="NCBI Taxonomy" id="59292"/>
    <lineage>
        <taxon>Eukaryota</taxon>
        <taxon>Viridiplantae</taxon>
        <taxon>Streptophyta</taxon>
        <taxon>Embryophyta</taxon>
        <taxon>Tracheophyta</taxon>
        <taxon>Spermatophyta</taxon>
        <taxon>Magnoliopsida</taxon>
        <taxon>eudicotyledons</taxon>
        <taxon>Gunneridae</taxon>
        <taxon>Pentapetalae</taxon>
        <taxon>rosids</taxon>
        <taxon>malvids</taxon>
        <taxon>Brassicales</taxon>
        <taxon>Brassicaceae</taxon>
        <taxon>Lepidieae</taxon>
        <taxon>Lepidium</taxon>
    </lineage>
</organism>
<geneLocation type="chloroplast"/>
<reference key="1">
    <citation type="submission" date="2007-03" db="EMBL/GenBank/DDBJ databases">
        <title>Sequencing analysis of Lepidium virginicum JO26 chloroplast DNA.</title>
        <authorList>
            <person name="Hosouchi T."/>
            <person name="Tsuruoka H."/>
            <person name="Kotani H."/>
        </authorList>
    </citation>
    <scope>NUCLEOTIDE SEQUENCE [LARGE SCALE GENOMIC DNA]</scope>
</reference>
<sequence>MIKNAFISFQEQKEESRGSVEFQVFIFTNKIRRLTSHLELHRKDYLSQRGLRKILGKRQRLLAYLSKKNRVRYKELINQLNIRELKTR</sequence>
<dbReference type="EMBL" id="AP009374">
    <property type="protein sequence ID" value="BAF50521.1"/>
    <property type="molecule type" value="Genomic_DNA"/>
</dbReference>
<dbReference type="RefSeq" id="YP_001123696.1">
    <property type="nucleotide sequence ID" value="NC_009273.1"/>
</dbReference>
<dbReference type="SMR" id="A4QLG6"/>
<dbReference type="GeneID" id="4962022"/>
<dbReference type="GO" id="GO:0009507">
    <property type="term" value="C:chloroplast"/>
    <property type="evidence" value="ECO:0007669"/>
    <property type="project" value="UniProtKB-SubCell"/>
</dbReference>
<dbReference type="GO" id="GO:1990904">
    <property type="term" value="C:ribonucleoprotein complex"/>
    <property type="evidence" value="ECO:0007669"/>
    <property type="project" value="UniProtKB-KW"/>
</dbReference>
<dbReference type="GO" id="GO:0005840">
    <property type="term" value="C:ribosome"/>
    <property type="evidence" value="ECO:0007669"/>
    <property type="project" value="UniProtKB-KW"/>
</dbReference>
<dbReference type="GO" id="GO:0003735">
    <property type="term" value="F:structural constituent of ribosome"/>
    <property type="evidence" value="ECO:0007669"/>
    <property type="project" value="InterPro"/>
</dbReference>
<dbReference type="GO" id="GO:0006412">
    <property type="term" value="P:translation"/>
    <property type="evidence" value="ECO:0007669"/>
    <property type="project" value="UniProtKB-UniRule"/>
</dbReference>
<dbReference type="CDD" id="cd00353">
    <property type="entry name" value="Ribosomal_S15p_S13e"/>
    <property type="match status" value="1"/>
</dbReference>
<dbReference type="FunFam" id="1.10.287.10:FF:000011">
    <property type="entry name" value="30S ribosomal protein S15, chloroplastic"/>
    <property type="match status" value="1"/>
</dbReference>
<dbReference type="Gene3D" id="1.10.287.10">
    <property type="entry name" value="S15/NS1, RNA-binding"/>
    <property type="match status" value="1"/>
</dbReference>
<dbReference type="HAMAP" id="MF_01343_B">
    <property type="entry name" value="Ribosomal_uS15_B"/>
    <property type="match status" value="1"/>
</dbReference>
<dbReference type="InterPro" id="IPR000589">
    <property type="entry name" value="Ribosomal_uS15"/>
</dbReference>
<dbReference type="InterPro" id="IPR005290">
    <property type="entry name" value="Ribosomal_uS15_bac-type"/>
</dbReference>
<dbReference type="InterPro" id="IPR009068">
    <property type="entry name" value="uS15_NS1_RNA-bd_sf"/>
</dbReference>
<dbReference type="NCBIfam" id="TIGR00952">
    <property type="entry name" value="S15_bact"/>
    <property type="match status" value="1"/>
</dbReference>
<dbReference type="PANTHER" id="PTHR23321">
    <property type="entry name" value="RIBOSOMAL PROTEIN S15, BACTERIAL AND ORGANELLAR"/>
    <property type="match status" value="1"/>
</dbReference>
<dbReference type="PANTHER" id="PTHR23321:SF26">
    <property type="entry name" value="SMALL RIBOSOMAL SUBUNIT PROTEIN US15M"/>
    <property type="match status" value="1"/>
</dbReference>
<dbReference type="Pfam" id="PF00312">
    <property type="entry name" value="Ribosomal_S15"/>
    <property type="match status" value="1"/>
</dbReference>
<dbReference type="SMART" id="SM01387">
    <property type="entry name" value="Ribosomal_S15"/>
    <property type="match status" value="1"/>
</dbReference>
<dbReference type="SUPFAM" id="SSF47060">
    <property type="entry name" value="S15/NS1 RNA-binding domain"/>
    <property type="match status" value="1"/>
</dbReference>
<dbReference type="PROSITE" id="PS00362">
    <property type="entry name" value="RIBOSOMAL_S15"/>
    <property type="match status" value="1"/>
</dbReference>
<accession>A4QLG6</accession>
<evidence type="ECO:0000250" key="1"/>
<evidence type="ECO:0000305" key="2"/>